<reference key="1">
    <citation type="journal article" date="2006" name="J. Bacteriol.">
        <title>Whole-genome sequence of Listeria welshimeri reveals common steps in genome reduction with Listeria innocua as compared to Listeria monocytogenes.</title>
        <authorList>
            <person name="Hain T."/>
            <person name="Steinweg C."/>
            <person name="Kuenne C.T."/>
            <person name="Billion A."/>
            <person name="Ghai R."/>
            <person name="Chatterjee S.S."/>
            <person name="Domann E."/>
            <person name="Kaerst U."/>
            <person name="Goesmann A."/>
            <person name="Bekel T."/>
            <person name="Bartels D."/>
            <person name="Kaiser O."/>
            <person name="Meyer F."/>
            <person name="Puehler A."/>
            <person name="Weisshaar B."/>
            <person name="Wehland J."/>
            <person name="Liang C."/>
            <person name="Dandekar T."/>
            <person name="Lampidis R."/>
            <person name="Kreft J."/>
            <person name="Goebel W."/>
            <person name="Chakraborty T."/>
        </authorList>
    </citation>
    <scope>NUCLEOTIDE SEQUENCE [LARGE SCALE GENOMIC DNA]</scope>
    <source>
        <strain>ATCC 35897 / DSM 20650 / CCUG 15529 / CIP 8149 / NCTC 11857 / SLCC 5334 / V8</strain>
    </source>
</reference>
<accession>A0AFT8</accession>
<gene>
    <name evidence="1" type="primary">isdG</name>
    <name type="ordered locus">lwe0452</name>
</gene>
<comment type="function">
    <text evidence="1">Allows bacterial pathogens to use the host heme as an iron source. Catalyzes the oxidative degradation of the heme macrocyclic porphyrin ring to the biliverdin in the presence of a suitable electron donor such as ascorbate or NADPH--cytochrome P450 reductase, with subsequent release of free iron.</text>
</comment>
<comment type="catalytic activity">
    <reaction evidence="1">
        <text>heme b + 3 reduced [NADPH--hemoprotein reductase] + 3 O2 = biliverdin IXalpha + CO + Fe(2+) + 3 oxidized [NADPH--hemoprotein reductase] + 3 H2O + H(+)</text>
        <dbReference type="Rhea" id="RHEA:21764"/>
        <dbReference type="Rhea" id="RHEA-COMP:11964"/>
        <dbReference type="Rhea" id="RHEA-COMP:11965"/>
        <dbReference type="ChEBI" id="CHEBI:15377"/>
        <dbReference type="ChEBI" id="CHEBI:15378"/>
        <dbReference type="ChEBI" id="CHEBI:15379"/>
        <dbReference type="ChEBI" id="CHEBI:17245"/>
        <dbReference type="ChEBI" id="CHEBI:29033"/>
        <dbReference type="ChEBI" id="CHEBI:57618"/>
        <dbReference type="ChEBI" id="CHEBI:57991"/>
        <dbReference type="ChEBI" id="CHEBI:58210"/>
        <dbReference type="ChEBI" id="CHEBI:60344"/>
        <dbReference type="EC" id="1.14.14.18"/>
    </reaction>
</comment>
<comment type="subunit">
    <text evidence="1">Homodimer.</text>
</comment>
<comment type="subcellular location">
    <subcellularLocation>
        <location evidence="1">Cytoplasm</location>
    </subcellularLocation>
</comment>
<comment type="similarity">
    <text evidence="1">Belongs to the antibiotic biosynthesis monooxygenase family. Heme-degrading monooxygenase IsdG subfamily.</text>
</comment>
<sequence length="121" mass="13845">MIIVTNTIKVEKGAAEHVIRQFTGANGDGHPTKDIAEVEGFLGFELWHSKPEDKDYEEVVVTSKWESEEAQRNWVKSDSFKKAHGRTKDTREQREDRKGIVGNEIARFEVVHVQNPVTIEK</sequence>
<name>HDOX_LISW6</name>
<dbReference type="EC" id="1.14.14.18" evidence="1"/>
<dbReference type="EMBL" id="AM263198">
    <property type="protein sequence ID" value="CAK19870.1"/>
    <property type="molecule type" value="Genomic_DNA"/>
</dbReference>
<dbReference type="RefSeq" id="WP_011701301.1">
    <property type="nucleotide sequence ID" value="NC_008555.1"/>
</dbReference>
<dbReference type="SMR" id="A0AFT8"/>
<dbReference type="STRING" id="386043.lwe0452"/>
<dbReference type="GeneID" id="61188342"/>
<dbReference type="KEGG" id="lwe:lwe0452"/>
<dbReference type="eggNOG" id="COG2329">
    <property type="taxonomic scope" value="Bacteria"/>
</dbReference>
<dbReference type="HOGENOM" id="CLU_141544_2_0_9"/>
<dbReference type="OrthoDB" id="384737at2"/>
<dbReference type="Proteomes" id="UP000000779">
    <property type="component" value="Chromosome"/>
</dbReference>
<dbReference type="GO" id="GO:0005737">
    <property type="term" value="C:cytoplasm"/>
    <property type="evidence" value="ECO:0007669"/>
    <property type="project" value="UniProtKB-SubCell"/>
</dbReference>
<dbReference type="GO" id="GO:0020037">
    <property type="term" value="F:heme binding"/>
    <property type="evidence" value="ECO:0007669"/>
    <property type="project" value="UniProtKB-UniRule"/>
</dbReference>
<dbReference type="GO" id="GO:0004392">
    <property type="term" value="F:heme oxygenase (decyclizing) activity"/>
    <property type="evidence" value="ECO:0007669"/>
    <property type="project" value="UniProtKB-UniRule"/>
</dbReference>
<dbReference type="GO" id="GO:0005506">
    <property type="term" value="F:iron ion binding"/>
    <property type="evidence" value="ECO:0007669"/>
    <property type="project" value="UniProtKB-UniRule"/>
</dbReference>
<dbReference type="GO" id="GO:0042167">
    <property type="term" value="P:heme catabolic process"/>
    <property type="evidence" value="ECO:0007669"/>
    <property type="project" value="UniProtKB-UniRule"/>
</dbReference>
<dbReference type="GO" id="GO:0033212">
    <property type="term" value="P:iron import into cell"/>
    <property type="evidence" value="ECO:0007669"/>
    <property type="project" value="InterPro"/>
</dbReference>
<dbReference type="Gene3D" id="3.30.70.100">
    <property type="match status" value="1"/>
</dbReference>
<dbReference type="HAMAP" id="MF_01272">
    <property type="entry name" value="Heme_degrading_monooxygenase"/>
    <property type="match status" value="1"/>
</dbReference>
<dbReference type="InterPro" id="IPR007138">
    <property type="entry name" value="ABM_dom"/>
</dbReference>
<dbReference type="InterPro" id="IPR011008">
    <property type="entry name" value="Dimeric_a/b-barrel"/>
</dbReference>
<dbReference type="InterPro" id="IPR050404">
    <property type="entry name" value="Heme-degrading_MO"/>
</dbReference>
<dbReference type="InterPro" id="IPR023953">
    <property type="entry name" value="IsdG"/>
</dbReference>
<dbReference type="NCBIfam" id="NF009841">
    <property type="entry name" value="PRK13316.1"/>
    <property type="match status" value="1"/>
</dbReference>
<dbReference type="PANTHER" id="PTHR34474:SF4">
    <property type="entry name" value="HEME OXYGENASE (STAPHYLOBILIN-PRODUCING) 1"/>
    <property type="match status" value="1"/>
</dbReference>
<dbReference type="PANTHER" id="PTHR34474">
    <property type="entry name" value="SIGNAL TRANSDUCTION PROTEIN TRAP"/>
    <property type="match status" value="1"/>
</dbReference>
<dbReference type="Pfam" id="PF03992">
    <property type="entry name" value="ABM"/>
    <property type="match status" value="1"/>
</dbReference>
<dbReference type="SUPFAM" id="SSF54909">
    <property type="entry name" value="Dimeric alpha+beta barrel"/>
    <property type="match status" value="1"/>
</dbReference>
<dbReference type="PROSITE" id="PS51725">
    <property type="entry name" value="ABM"/>
    <property type="match status" value="1"/>
</dbReference>
<protein>
    <recommendedName>
        <fullName evidence="1">Heme-degrading monooxygenase</fullName>
        <ecNumber evidence="1">1.14.14.18</ecNumber>
    </recommendedName>
    <alternativeName>
        <fullName evidence="1">Heme oxygenase</fullName>
    </alternativeName>
    <alternativeName>
        <fullName evidence="1">Iron-regulated surface determinant</fullName>
    </alternativeName>
    <alternativeName>
        <fullName evidence="1">Iron-responsive surface determinant</fullName>
    </alternativeName>
</protein>
<proteinExistence type="inferred from homology"/>
<keyword id="KW-0963">Cytoplasm</keyword>
<keyword id="KW-0349">Heme</keyword>
<keyword id="KW-0408">Iron</keyword>
<keyword id="KW-0479">Metal-binding</keyword>
<keyword id="KW-0503">Monooxygenase</keyword>
<keyword id="KW-0560">Oxidoreductase</keyword>
<feature type="chain" id="PRO_1000067383" description="Heme-degrading monooxygenase">
    <location>
        <begin position="1"/>
        <end position="121"/>
    </location>
</feature>
<feature type="domain" description="ABM" evidence="1">
    <location>
        <begin position="2"/>
        <end position="101"/>
    </location>
</feature>
<feature type="region of interest" description="Disordered" evidence="2">
    <location>
        <begin position="76"/>
        <end position="98"/>
    </location>
</feature>
<feature type="compositionally biased region" description="Basic and acidic residues" evidence="2">
    <location>
        <begin position="78"/>
        <end position="98"/>
    </location>
</feature>
<feature type="binding site" evidence="1">
    <location>
        <position position="6"/>
    </location>
    <ligand>
        <name>Fe cation</name>
        <dbReference type="ChEBI" id="CHEBI:24875"/>
    </ligand>
</feature>
<feature type="binding site" description="axial binding residue" evidence="1">
    <location>
        <position position="84"/>
    </location>
    <ligand>
        <name>heme</name>
        <dbReference type="ChEBI" id="CHEBI:30413"/>
    </ligand>
    <ligandPart>
        <name>Fe</name>
        <dbReference type="ChEBI" id="CHEBI:18248"/>
    </ligandPart>
</feature>
<feature type="site" description="Transition state stabilizer" evidence="1">
    <location>
        <position position="74"/>
    </location>
</feature>
<organism>
    <name type="scientific">Listeria welshimeri serovar 6b (strain ATCC 35897 / DSM 20650 / CCUG 15529 / CIP 8149 / NCTC 11857 / SLCC 5334 / V8)</name>
    <dbReference type="NCBI Taxonomy" id="386043"/>
    <lineage>
        <taxon>Bacteria</taxon>
        <taxon>Bacillati</taxon>
        <taxon>Bacillota</taxon>
        <taxon>Bacilli</taxon>
        <taxon>Bacillales</taxon>
        <taxon>Listeriaceae</taxon>
        <taxon>Listeria</taxon>
    </lineage>
</organism>
<evidence type="ECO:0000255" key="1">
    <source>
        <dbReference type="HAMAP-Rule" id="MF_01272"/>
    </source>
</evidence>
<evidence type="ECO:0000256" key="2">
    <source>
        <dbReference type="SAM" id="MobiDB-lite"/>
    </source>
</evidence>